<accession>B1XCA9</accession>
<dbReference type="EC" id="2.1.2.11" evidence="1"/>
<dbReference type="EMBL" id="CP000948">
    <property type="protein sequence ID" value="ACB01313.1"/>
    <property type="molecule type" value="Genomic_DNA"/>
</dbReference>
<dbReference type="RefSeq" id="WP_000805497.1">
    <property type="nucleotide sequence ID" value="NC_010473.1"/>
</dbReference>
<dbReference type="SMR" id="B1XCA9"/>
<dbReference type="KEGG" id="ecd:ECDH10B_0114"/>
<dbReference type="HOGENOM" id="CLU_036645_1_0_6"/>
<dbReference type="UniPathway" id="UPA00028">
    <property type="reaction ID" value="UER00003"/>
</dbReference>
<dbReference type="GO" id="GO:0005737">
    <property type="term" value="C:cytoplasm"/>
    <property type="evidence" value="ECO:0007669"/>
    <property type="project" value="UniProtKB-SubCell"/>
</dbReference>
<dbReference type="GO" id="GO:0003864">
    <property type="term" value="F:3-methyl-2-oxobutanoate hydroxymethyltransferase activity"/>
    <property type="evidence" value="ECO:0007669"/>
    <property type="project" value="UniProtKB-UniRule"/>
</dbReference>
<dbReference type="GO" id="GO:0000287">
    <property type="term" value="F:magnesium ion binding"/>
    <property type="evidence" value="ECO:0007669"/>
    <property type="project" value="TreeGrafter"/>
</dbReference>
<dbReference type="GO" id="GO:0015940">
    <property type="term" value="P:pantothenate biosynthetic process"/>
    <property type="evidence" value="ECO:0007669"/>
    <property type="project" value="UniProtKB-UniRule"/>
</dbReference>
<dbReference type="CDD" id="cd06557">
    <property type="entry name" value="KPHMT-like"/>
    <property type="match status" value="1"/>
</dbReference>
<dbReference type="FunFam" id="3.20.20.60:FF:000003">
    <property type="entry name" value="3-methyl-2-oxobutanoate hydroxymethyltransferase"/>
    <property type="match status" value="1"/>
</dbReference>
<dbReference type="Gene3D" id="3.20.20.60">
    <property type="entry name" value="Phosphoenolpyruvate-binding domains"/>
    <property type="match status" value="1"/>
</dbReference>
<dbReference type="HAMAP" id="MF_00156">
    <property type="entry name" value="PanB"/>
    <property type="match status" value="1"/>
</dbReference>
<dbReference type="InterPro" id="IPR003700">
    <property type="entry name" value="Pantoate_hydroxy_MeTrfase"/>
</dbReference>
<dbReference type="InterPro" id="IPR015813">
    <property type="entry name" value="Pyrv/PenolPyrv_kinase-like_dom"/>
</dbReference>
<dbReference type="InterPro" id="IPR040442">
    <property type="entry name" value="Pyrv_kinase-like_dom_sf"/>
</dbReference>
<dbReference type="NCBIfam" id="TIGR00222">
    <property type="entry name" value="panB"/>
    <property type="match status" value="1"/>
</dbReference>
<dbReference type="NCBIfam" id="NF001452">
    <property type="entry name" value="PRK00311.1"/>
    <property type="match status" value="1"/>
</dbReference>
<dbReference type="PANTHER" id="PTHR20881">
    <property type="entry name" value="3-METHYL-2-OXOBUTANOATE HYDROXYMETHYLTRANSFERASE"/>
    <property type="match status" value="1"/>
</dbReference>
<dbReference type="PANTHER" id="PTHR20881:SF0">
    <property type="entry name" value="3-METHYL-2-OXOBUTANOATE HYDROXYMETHYLTRANSFERASE"/>
    <property type="match status" value="1"/>
</dbReference>
<dbReference type="Pfam" id="PF02548">
    <property type="entry name" value="Pantoate_transf"/>
    <property type="match status" value="1"/>
</dbReference>
<dbReference type="PIRSF" id="PIRSF000388">
    <property type="entry name" value="Pantoate_hydroxy_MeTrfase"/>
    <property type="match status" value="1"/>
</dbReference>
<dbReference type="SUPFAM" id="SSF51621">
    <property type="entry name" value="Phosphoenolpyruvate/pyruvate domain"/>
    <property type="match status" value="1"/>
</dbReference>
<gene>
    <name evidence="1" type="primary">panB</name>
    <name type="ordered locus">ECDH10B_0114</name>
</gene>
<comment type="function">
    <text evidence="1">Catalyzes the reversible reaction in which hydroxymethyl group from 5,10-methylenetetrahydrofolate is transferred onto alpha-ketoisovalerate to form ketopantoate.</text>
</comment>
<comment type="catalytic activity">
    <reaction evidence="1">
        <text>3-methyl-2-oxobutanoate + (6R)-5,10-methylene-5,6,7,8-tetrahydrofolate + H2O = 2-dehydropantoate + (6S)-5,6,7,8-tetrahydrofolate</text>
        <dbReference type="Rhea" id="RHEA:11824"/>
        <dbReference type="ChEBI" id="CHEBI:11561"/>
        <dbReference type="ChEBI" id="CHEBI:11851"/>
        <dbReference type="ChEBI" id="CHEBI:15377"/>
        <dbReference type="ChEBI" id="CHEBI:15636"/>
        <dbReference type="ChEBI" id="CHEBI:57453"/>
        <dbReference type="EC" id="2.1.2.11"/>
    </reaction>
</comment>
<comment type="cofactor">
    <cofactor evidence="1">
        <name>Mg(2+)</name>
        <dbReference type="ChEBI" id="CHEBI:18420"/>
    </cofactor>
    <text evidence="1">Binds 1 Mg(2+) ion per subunit.</text>
</comment>
<comment type="pathway">
    <text evidence="1">Cofactor biosynthesis; (R)-pantothenate biosynthesis; (R)-pantoate from 3-methyl-2-oxobutanoate: step 1/2.</text>
</comment>
<comment type="subunit">
    <text evidence="1">Homodecamer; pentamer of dimers.</text>
</comment>
<comment type="subcellular location">
    <subcellularLocation>
        <location evidence="1">Cytoplasm</location>
    </subcellularLocation>
</comment>
<comment type="similarity">
    <text evidence="1">Belongs to the PanB family.</text>
</comment>
<protein>
    <recommendedName>
        <fullName evidence="1">3-methyl-2-oxobutanoate hydroxymethyltransferase</fullName>
        <ecNumber evidence="1">2.1.2.11</ecNumber>
    </recommendedName>
    <alternativeName>
        <fullName evidence="1">Ketopantoate hydroxymethyltransferase</fullName>
        <shortName evidence="1">KPHMT</shortName>
    </alternativeName>
</protein>
<organism>
    <name type="scientific">Escherichia coli (strain K12 / DH10B)</name>
    <dbReference type="NCBI Taxonomy" id="316385"/>
    <lineage>
        <taxon>Bacteria</taxon>
        <taxon>Pseudomonadati</taxon>
        <taxon>Pseudomonadota</taxon>
        <taxon>Gammaproteobacteria</taxon>
        <taxon>Enterobacterales</taxon>
        <taxon>Enterobacteriaceae</taxon>
        <taxon>Escherichia</taxon>
    </lineage>
</organism>
<name>PANB_ECODH</name>
<keyword id="KW-0963">Cytoplasm</keyword>
<keyword id="KW-0460">Magnesium</keyword>
<keyword id="KW-0479">Metal-binding</keyword>
<keyword id="KW-0566">Pantothenate biosynthesis</keyword>
<keyword id="KW-0808">Transferase</keyword>
<proteinExistence type="inferred from homology"/>
<evidence type="ECO:0000255" key="1">
    <source>
        <dbReference type="HAMAP-Rule" id="MF_00156"/>
    </source>
</evidence>
<sequence>MKPTTISLLQKYKQEKKRFATITAYDYSFAKLFADEGLNVMLVGDSLGMTVQGHDSTLPVTVADIAYHTAAVRRGAPNCLLLADLPFMAYATPEQAFENAATVMRAGANMVKIEGGEWLVETVQMLTERAVPVCGHLGLTPQSVNIFGGYKVQGRGDEAGDQLLSDALALEAAGAQLLVLECVPVELAKRITEALAIPVIGIGAGNVTDGQILVMHDAFGITGGHIPKFAKNFLAETGDIRAAVRQYMAEVESGVYPGEEHSFH</sequence>
<feature type="chain" id="PRO_1000096962" description="3-methyl-2-oxobutanoate hydroxymethyltransferase">
    <location>
        <begin position="1"/>
        <end position="264"/>
    </location>
</feature>
<feature type="active site" description="Proton acceptor" evidence="1">
    <location>
        <position position="181"/>
    </location>
</feature>
<feature type="binding site" evidence="1">
    <location>
        <begin position="45"/>
        <end position="46"/>
    </location>
    <ligand>
        <name>3-methyl-2-oxobutanoate</name>
        <dbReference type="ChEBI" id="CHEBI:11851"/>
    </ligand>
</feature>
<feature type="binding site" evidence="1">
    <location>
        <position position="45"/>
    </location>
    <ligand>
        <name>Mg(2+)</name>
        <dbReference type="ChEBI" id="CHEBI:18420"/>
    </ligand>
</feature>
<feature type="binding site" evidence="1">
    <location>
        <position position="84"/>
    </location>
    <ligand>
        <name>3-methyl-2-oxobutanoate</name>
        <dbReference type="ChEBI" id="CHEBI:11851"/>
    </ligand>
</feature>
<feature type="binding site" evidence="1">
    <location>
        <position position="84"/>
    </location>
    <ligand>
        <name>Mg(2+)</name>
        <dbReference type="ChEBI" id="CHEBI:18420"/>
    </ligand>
</feature>
<feature type="binding site" evidence="1">
    <location>
        <position position="112"/>
    </location>
    <ligand>
        <name>3-methyl-2-oxobutanoate</name>
        <dbReference type="ChEBI" id="CHEBI:11851"/>
    </ligand>
</feature>
<feature type="binding site" evidence="1">
    <location>
        <position position="114"/>
    </location>
    <ligand>
        <name>Mg(2+)</name>
        <dbReference type="ChEBI" id="CHEBI:18420"/>
    </ligand>
</feature>
<reference key="1">
    <citation type="journal article" date="2008" name="J. Bacteriol.">
        <title>The complete genome sequence of Escherichia coli DH10B: insights into the biology of a laboratory workhorse.</title>
        <authorList>
            <person name="Durfee T."/>
            <person name="Nelson R."/>
            <person name="Baldwin S."/>
            <person name="Plunkett G. III"/>
            <person name="Burland V."/>
            <person name="Mau B."/>
            <person name="Petrosino J.F."/>
            <person name="Qin X."/>
            <person name="Muzny D.M."/>
            <person name="Ayele M."/>
            <person name="Gibbs R.A."/>
            <person name="Csorgo B."/>
            <person name="Posfai G."/>
            <person name="Weinstock G.M."/>
            <person name="Blattner F.R."/>
        </authorList>
    </citation>
    <scope>NUCLEOTIDE SEQUENCE [LARGE SCALE GENOMIC DNA]</scope>
    <source>
        <strain>K12 / DH10B</strain>
    </source>
</reference>